<organism>
    <name type="scientific">Neurospora crassa (strain ATCC 24698 / 74-OR23-1A / CBS 708.71 / DSM 1257 / FGSC 987)</name>
    <dbReference type="NCBI Taxonomy" id="367110"/>
    <lineage>
        <taxon>Eukaryota</taxon>
        <taxon>Fungi</taxon>
        <taxon>Dikarya</taxon>
        <taxon>Ascomycota</taxon>
        <taxon>Pezizomycotina</taxon>
        <taxon>Sordariomycetes</taxon>
        <taxon>Sordariomycetidae</taxon>
        <taxon>Sordariales</taxon>
        <taxon>Sordariaceae</taxon>
        <taxon>Neurospora</taxon>
    </lineage>
</organism>
<comment type="function">
    <text evidence="3">Catalyzes conversion of folates to polyglutamate derivatives allowing concentration of folate compounds in the cell and the intracellular retention of these cofactors, which are important substrates for most of the folate-dependent enzymes that are involved in one-carbon transfer reactions involved in purine, pyrimidine and amino acid synthesis.</text>
</comment>
<comment type="catalytic activity">
    <reaction evidence="3">
        <text>(6S)-5,6,7,8-tetrahydrofolyl-(gamma-L-Glu)(n) + L-glutamate + ATP = (6S)-5,6,7,8-tetrahydrofolyl-(gamma-L-Glu)(n+1) + ADP + phosphate + H(+)</text>
        <dbReference type="Rhea" id="RHEA:10580"/>
        <dbReference type="Rhea" id="RHEA-COMP:14738"/>
        <dbReference type="Rhea" id="RHEA-COMP:14740"/>
        <dbReference type="ChEBI" id="CHEBI:15378"/>
        <dbReference type="ChEBI" id="CHEBI:29985"/>
        <dbReference type="ChEBI" id="CHEBI:30616"/>
        <dbReference type="ChEBI" id="CHEBI:43474"/>
        <dbReference type="ChEBI" id="CHEBI:141005"/>
        <dbReference type="ChEBI" id="CHEBI:456216"/>
        <dbReference type="EC" id="6.3.2.17"/>
    </reaction>
</comment>
<comment type="cofactor">
    <cofactor evidence="1">
        <name>a monovalent cation</name>
        <dbReference type="ChEBI" id="CHEBI:60242"/>
    </cofactor>
    <text evidence="1">A monovalent cation.</text>
</comment>
<comment type="pathway">
    <text>Cofactor biosynthesis; tetrahydrofolylpolyglutamate biosynthesis.</text>
</comment>
<comment type="subcellular location">
    <subcellularLocation>
        <location evidence="1">Mitochondrion inner membrane</location>
    </subcellularLocation>
    <subcellularLocation>
        <location evidence="1">Mitochondrion matrix</location>
    </subcellularLocation>
    <subcellularLocation>
        <location evidence="1">Cytoplasm</location>
    </subcellularLocation>
</comment>
<comment type="developmental stage">
    <text evidence="4">Higher transcript levels are detected in freshly germinated mycelium, with less expression seen in ungerminated conidia and cultures near stationary phase.</text>
</comment>
<comment type="similarity">
    <text evidence="5">Belongs to the folylpolyglutamate synthase family.</text>
</comment>
<dbReference type="EC" id="6.3.2.17"/>
<dbReference type="EMBL" id="AF005040">
    <property type="protein sequence ID" value="AAB61730.1"/>
    <property type="molecule type" value="Genomic_DNA"/>
</dbReference>
<dbReference type="EMBL" id="BX842682">
    <property type="protein sequence ID" value="CAE82006.1"/>
    <property type="molecule type" value="Genomic_DNA"/>
</dbReference>
<dbReference type="EMBL" id="CM002236">
    <property type="protein sequence ID" value="ESA44238.1"/>
    <property type="molecule type" value="Genomic_DNA"/>
</dbReference>
<dbReference type="EMBL" id="CM002236">
    <property type="protein sequence ID" value="ESA44239.1"/>
    <property type="molecule type" value="Genomic_DNA"/>
</dbReference>
<dbReference type="PIR" id="T47217">
    <property type="entry name" value="T47217"/>
</dbReference>
<dbReference type="RefSeq" id="XP_011392846.1">
    <property type="nucleotide sequence ID" value="XM_011394544.1"/>
</dbReference>
<dbReference type="RefSeq" id="XP_011392847.1">
    <property type="nucleotide sequence ID" value="XM_011394545.1"/>
</dbReference>
<dbReference type="SMR" id="O13492"/>
<dbReference type="FunCoup" id="O13492">
    <property type="interactions" value="650"/>
</dbReference>
<dbReference type="STRING" id="367110.O13492"/>
<dbReference type="PaxDb" id="5141-EFNCRP00000000529"/>
<dbReference type="EnsemblFungi" id="ESA44238">
    <property type="protein sequence ID" value="ESA44238"/>
    <property type="gene ID" value="NCU00892"/>
</dbReference>
<dbReference type="EnsemblFungi" id="ESA44239">
    <property type="protein sequence ID" value="ESA44239"/>
    <property type="gene ID" value="NCU00892"/>
</dbReference>
<dbReference type="GeneID" id="3880932"/>
<dbReference type="KEGG" id="ncr:NCU00892"/>
<dbReference type="VEuPathDB" id="FungiDB:NCU00892"/>
<dbReference type="HOGENOM" id="CLU_015869_0_1_1"/>
<dbReference type="InParanoid" id="O13492"/>
<dbReference type="OrthoDB" id="5212574at2759"/>
<dbReference type="UniPathway" id="UPA00850"/>
<dbReference type="Proteomes" id="UP000001805">
    <property type="component" value="Chromosome 1, Linkage Group I"/>
</dbReference>
<dbReference type="GO" id="GO:0005737">
    <property type="term" value="C:cytoplasm"/>
    <property type="evidence" value="ECO:0000318"/>
    <property type="project" value="GO_Central"/>
</dbReference>
<dbReference type="GO" id="GO:0005829">
    <property type="term" value="C:cytosol"/>
    <property type="evidence" value="ECO:0000318"/>
    <property type="project" value="GO_Central"/>
</dbReference>
<dbReference type="GO" id="GO:0005743">
    <property type="term" value="C:mitochondrial inner membrane"/>
    <property type="evidence" value="ECO:0007669"/>
    <property type="project" value="UniProtKB-SubCell"/>
</dbReference>
<dbReference type="GO" id="GO:0005759">
    <property type="term" value="C:mitochondrial matrix"/>
    <property type="evidence" value="ECO:0007669"/>
    <property type="project" value="UniProtKB-SubCell"/>
</dbReference>
<dbReference type="GO" id="GO:0005739">
    <property type="term" value="C:mitochondrion"/>
    <property type="evidence" value="ECO:0000318"/>
    <property type="project" value="GO_Central"/>
</dbReference>
<dbReference type="GO" id="GO:0005524">
    <property type="term" value="F:ATP binding"/>
    <property type="evidence" value="ECO:0007669"/>
    <property type="project" value="UniProtKB-KW"/>
</dbReference>
<dbReference type="GO" id="GO:0046872">
    <property type="term" value="F:metal ion binding"/>
    <property type="evidence" value="ECO:0007669"/>
    <property type="project" value="UniProtKB-KW"/>
</dbReference>
<dbReference type="GO" id="GO:0004326">
    <property type="term" value="F:tetrahydrofolylpolyglutamate synthase activity"/>
    <property type="evidence" value="ECO:0000318"/>
    <property type="project" value="GO_Central"/>
</dbReference>
<dbReference type="GO" id="GO:0006730">
    <property type="term" value="P:one-carbon metabolic process"/>
    <property type="evidence" value="ECO:0007669"/>
    <property type="project" value="UniProtKB-KW"/>
</dbReference>
<dbReference type="GO" id="GO:0046901">
    <property type="term" value="P:tetrahydrofolylpolyglutamate biosynthetic process"/>
    <property type="evidence" value="ECO:0000318"/>
    <property type="project" value="GO_Central"/>
</dbReference>
<dbReference type="FunFam" id="3.40.1190.10:FF:000009">
    <property type="entry name" value="Folylpolyglutamate synthase"/>
    <property type="match status" value="1"/>
</dbReference>
<dbReference type="FunFam" id="3.90.190.20:FF:000031">
    <property type="entry name" value="Folylpolyglutamate synthase"/>
    <property type="match status" value="1"/>
</dbReference>
<dbReference type="Gene3D" id="3.90.190.20">
    <property type="entry name" value="Mur ligase, C-terminal domain"/>
    <property type="match status" value="1"/>
</dbReference>
<dbReference type="Gene3D" id="3.40.1190.10">
    <property type="entry name" value="Mur-like, catalytic domain"/>
    <property type="match status" value="1"/>
</dbReference>
<dbReference type="InterPro" id="IPR001645">
    <property type="entry name" value="Folylpolyglutamate_synth"/>
</dbReference>
<dbReference type="InterPro" id="IPR018109">
    <property type="entry name" value="Folylpolyglutamate_synth_CS"/>
</dbReference>
<dbReference type="InterPro" id="IPR023600">
    <property type="entry name" value="Folylpolyglutamate_synth_euk"/>
</dbReference>
<dbReference type="InterPro" id="IPR036565">
    <property type="entry name" value="Mur-like_cat_sf"/>
</dbReference>
<dbReference type="InterPro" id="IPR036615">
    <property type="entry name" value="Mur_ligase_C_dom_sf"/>
</dbReference>
<dbReference type="NCBIfam" id="TIGR01499">
    <property type="entry name" value="folC"/>
    <property type="match status" value="1"/>
</dbReference>
<dbReference type="PANTHER" id="PTHR11136:SF5">
    <property type="entry name" value="FOLYLPOLYGLUTAMATE SYNTHASE, MITOCHONDRIAL"/>
    <property type="match status" value="1"/>
</dbReference>
<dbReference type="PANTHER" id="PTHR11136">
    <property type="entry name" value="FOLYLPOLYGLUTAMATE SYNTHASE-RELATED"/>
    <property type="match status" value="1"/>
</dbReference>
<dbReference type="PIRSF" id="PIRSF038895">
    <property type="entry name" value="FPGS"/>
    <property type="match status" value="1"/>
</dbReference>
<dbReference type="SUPFAM" id="SSF53623">
    <property type="entry name" value="MurD-like peptide ligases, catalytic domain"/>
    <property type="match status" value="1"/>
</dbReference>
<dbReference type="SUPFAM" id="SSF53244">
    <property type="entry name" value="MurD-like peptide ligases, peptide-binding domain"/>
    <property type="match status" value="1"/>
</dbReference>
<dbReference type="PROSITE" id="PS01011">
    <property type="entry name" value="FOLYLPOLYGLU_SYNT_1"/>
    <property type="match status" value="1"/>
</dbReference>
<dbReference type="PROSITE" id="PS01012">
    <property type="entry name" value="FOLYLPOLYGLU_SYNT_2"/>
    <property type="match status" value="1"/>
</dbReference>
<reference key="1">
    <citation type="journal article" date="1998" name="Phytochemistry">
        <title>Folylpolyglutamate synthesis in Neurospora crassa: primary structure of the folylpolyglutamate synthetase gene and elucidation of the met-6 mutation.</title>
        <authorList>
            <person name="Atkinson I.J."/>
            <person name="Nargang F.E."/>
            <person name="Cossins E.A."/>
        </authorList>
    </citation>
    <scope>NUCLEOTIDE SEQUENCE [GENOMIC DNA]</scope>
    <scope>DEVELOPMENTAL STAGE</scope>
    <scope>VARIANTS GLN-32; SER-107 AND ILE-108</scope>
    <scope>MUTAGENESIS OF SER-134</scope>
    <source>
        <strain>ATCC 24698 / 74-OR23-1A / CBS 708.71 / DSM 1257 / FGSC 987</strain>
    </source>
</reference>
<reference key="2">
    <citation type="journal article" date="2003" name="Nucleic Acids Res.">
        <title>What's in the genome of a filamentous fungus? Analysis of the Neurospora genome sequence.</title>
        <authorList>
            <person name="Mannhaupt G."/>
            <person name="Montrone C."/>
            <person name="Haase D."/>
            <person name="Mewes H.-W."/>
            <person name="Aign V."/>
            <person name="Hoheisel J.D."/>
            <person name="Fartmann B."/>
            <person name="Nyakatura G."/>
            <person name="Kempken F."/>
            <person name="Maier J."/>
            <person name="Schulte U."/>
        </authorList>
    </citation>
    <scope>NUCLEOTIDE SEQUENCE [LARGE SCALE GENOMIC DNA]</scope>
    <source>
        <strain>ATCC 24698 / 74-OR23-1A / CBS 708.71 / DSM 1257 / FGSC 987</strain>
    </source>
</reference>
<reference key="3">
    <citation type="journal article" date="2003" name="Nature">
        <title>The genome sequence of the filamentous fungus Neurospora crassa.</title>
        <authorList>
            <person name="Galagan J.E."/>
            <person name="Calvo S.E."/>
            <person name="Borkovich K.A."/>
            <person name="Selker E.U."/>
            <person name="Read N.D."/>
            <person name="Jaffe D.B."/>
            <person name="FitzHugh W."/>
            <person name="Ma L.-J."/>
            <person name="Smirnov S."/>
            <person name="Purcell S."/>
            <person name="Rehman B."/>
            <person name="Elkins T."/>
            <person name="Engels R."/>
            <person name="Wang S."/>
            <person name="Nielsen C.B."/>
            <person name="Butler J."/>
            <person name="Endrizzi M."/>
            <person name="Qui D."/>
            <person name="Ianakiev P."/>
            <person name="Bell-Pedersen D."/>
            <person name="Nelson M.A."/>
            <person name="Werner-Washburne M."/>
            <person name="Selitrennikoff C.P."/>
            <person name="Kinsey J.A."/>
            <person name="Braun E.L."/>
            <person name="Zelter A."/>
            <person name="Schulte U."/>
            <person name="Kothe G.O."/>
            <person name="Jedd G."/>
            <person name="Mewes H.-W."/>
            <person name="Staben C."/>
            <person name="Marcotte E."/>
            <person name="Greenberg D."/>
            <person name="Roy A."/>
            <person name="Foley K."/>
            <person name="Naylor J."/>
            <person name="Stange-Thomann N."/>
            <person name="Barrett R."/>
            <person name="Gnerre S."/>
            <person name="Kamal M."/>
            <person name="Kamvysselis M."/>
            <person name="Mauceli E.W."/>
            <person name="Bielke C."/>
            <person name="Rudd S."/>
            <person name="Frishman D."/>
            <person name="Krystofova S."/>
            <person name="Rasmussen C."/>
            <person name="Metzenberg R.L."/>
            <person name="Perkins D.D."/>
            <person name="Kroken S."/>
            <person name="Cogoni C."/>
            <person name="Macino G."/>
            <person name="Catcheside D.E.A."/>
            <person name="Li W."/>
            <person name="Pratt R.J."/>
            <person name="Osmani S.A."/>
            <person name="DeSouza C.P.C."/>
            <person name="Glass N.L."/>
            <person name="Orbach M.J."/>
            <person name="Berglund J.A."/>
            <person name="Voelker R."/>
            <person name="Yarden O."/>
            <person name="Plamann M."/>
            <person name="Seiler S."/>
            <person name="Dunlap J.C."/>
            <person name="Radford A."/>
            <person name="Aramayo R."/>
            <person name="Natvig D.O."/>
            <person name="Alex L.A."/>
            <person name="Mannhaupt G."/>
            <person name="Ebbole D.J."/>
            <person name="Freitag M."/>
            <person name="Paulsen I."/>
            <person name="Sachs M.S."/>
            <person name="Lander E.S."/>
            <person name="Nusbaum C."/>
            <person name="Birren B.W."/>
        </authorList>
    </citation>
    <scope>NUCLEOTIDE SEQUENCE [LARGE SCALE GENOMIC DNA]</scope>
    <source>
        <strain>ATCC 24698 / 74-OR23-1A / CBS 708.71 / DSM 1257 / FGSC 987</strain>
    </source>
</reference>
<reference key="4">
    <citation type="journal article" date="1995" name="Phytochemistry">
        <title>Folylpolyglutamate synthesis in Neurospora crassa: transformation of polyglutamate-deficient mutants.</title>
        <authorList>
            <person name="Atkinson I.J."/>
            <person name="Nargang F.E."/>
            <person name="Cossins E.A."/>
        </authorList>
    </citation>
    <scope>FUNCTION</scope>
    <scope>CATALYTIC ACTIVITY</scope>
</reference>
<feature type="chain" id="PRO_0000168310" description="Folylpolyglutamate synthase">
    <location>
        <begin position="1"/>
        <end position="528"/>
    </location>
</feature>
<feature type="binding site" evidence="2">
    <location>
        <begin position="104"/>
        <end position="107"/>
    </location>
    <ligand>
        <name>ATP</name>
        <dbReference type="ChEBI" id="CHEBI:30616"/>
    </ligand>
</feature>
<feature type="binding site" evidence="2">
    <location>
        <position position="134"/>
    </location>
    <ligand>
        <name>Mg(2+)</name>
        <dbReference type="ChEBI" id="CHEBI:18420"/>
        <label>1</label>
    </ligand>
</feature>
<feature type="binding site" evidence="2">
    <location>
        <position position="208"/>
    </location>
    <ligand>
        <name>Mg(2+)</name>
        <dbReference type="ChEBI" id="CHEBI:18420"/>
        <label>1</label>
    </ligand>
</feature>
<feature type="binding site" evidence="2">
    <location>
        <position position="236"/>
    </location>
    <ligand>
        <name>Mg(2+)</name>
        <dbReference type="ChEBI" id="CHEBI:18420"/>
        <label>2</label>
    </ligand>
</feature>
<feature type="binding site" evidence="2">
    <location>
        <position position="351"/>
    </location>
    <ligand>
        <name>ATP</name>
        <dbReference type="ChEBI" id="CHEBI:30616"/>
    </ligand>
</feature>
<feature type="binding site" evidence="2">
    <location>
        <position position="365"/>
    </location>
    <ligand>
        <name>ATP</name>
        <dbReference type="ChEBI" id="CHEBI:30616"/>
    </ligand>
</feature>
<feature type="sequence variant" evidence="4">
    <original>K</original>
    <variation>Q</variation>
    <location>
        <position position="32"/>
    </location>
</feature>
<feature type="sequence variant" evidence="4">
    <original>G</original>
    <variation>S</variation>
    <location>
        <position position="107"/>
    </location>
</feature>
<feature type="sequence variant" evidence="4">
    <original>T</original>
    <variation>I</variation>
    <location>
        <position position="108"/>
    </location>
</feature>
<feature type="mutagenesis site" description="In met-6; auxotrophic to methionine." evidence="4">
    <original>S</original>
    <variation>P</variation>
    <location>
        <position position="134"/>
    </location>
</feature>
<feature type="sequence conflict" description="In Ref. 1; AAB61730." evidence="5" ref="1">
    <original>L</original>
    <variation>P</variation>
    <location>
        <position position="288"/>
    </location>
</feature>
<accession>O13492</accession>
<accession>Q7RW09</accession>
<accession>V5IRB3</accession>
<gene>
    <name type="primary">met-6</name>
    <name type="ORF">B13C5.220</name>
    <name type="ORF">NCU00892</name>
</gene>
<keyword id="KW-0067">ATP-binding</keyword>
<keyword id="KW-0963">Cytoplasm</keyword>
<keyword id="KW-0436">Ligase</keyword>
<keyword id="KW-0460">Magnesium</keyword>
<keyword id="KW-0472">Membrane</keyword>
<keyword id="KW-0479">Metal-binding</keyword>
<keyword id="KW-0496">Mitochondrion</keyword>
<keyword id="KW-0999">Mitochondrion inner membrane</keyword>
<keyword id="KW-0547">Nucleotide-binding</keyword>
<keyword id="KW-0554">One-carbon metabolism</keyword>
<keyword id="KW-1185">Reference proteome</keyword>
<evidence type="ECO:0000250" key="1"/>
<evidence type="ECO:0000250" key="2">
    <source>
        <dbReference type="UniProtKB" id="P08192"/>
    </source>
</evidence>
<evidence type="ECO:0000269" key="3">
    <source>
    </source>
</evidence>
<evidence type="ECO:0000269" key="4">
    <source>
    </source>
</evidence>
<evidence type="ECO:0000305" key="5"/>
<sequence length="528" mass="58525">MHHVLRPIAFRLALVSPLRSLTITHHHLFFTKRTMASSARTYNDAIDALNSLQTPFAVIEARRKAGIRPDAHSVKEMRAYLARIGYSSQDLDRLNIVHVAGTKGKGGTCAFVDSILTRHQRTHGIPRRIGLFTSPHLIAVRERIRIDSKPISEELFARYFFEVWDRLETSQLAKDEVELGSKPIYARYLTLMSYHVYLSEGVDVAIYETGIGGEYDATNVVDRPVVSGISTLGIDHVFVLGDTVDKIAWHKAGIMKTGSPAFTIEQVPSATQVLKDRAVEKGVDLKILDVDPRLNGVKIRPDAVFQKKNATLAIALAETALKKLDPSFKPGTDSLSPEFVQGLEQVVWRGRCEVKEEDQAVWHLDGAHTVDSLKVAGRWFVEECVKKAKGGPKVLIFNQQGRSEAVDFLDGLCNTVKSADPEGTGFSHVIFCTNVTYATTGYKKDFVNHQYNPKDIENMTQQRVFAERWSTLDPSANVMLIPTIEEAINKARSLVDTTEGEQKVQALITGSLHLVGGALGILEKADAL</sequence>
<proteinExistence type="evidence at protein level"/>
<protein>
    <recommendedName>
        <fullName>Folylpolyglutamate synthase</fullName>
        <ecNumber>6.3.2.17</ecNumber>
    </recommendedName>
    <alternativeName>
        <fullName>Folylpoly-gamma-glutamate synthetase</fullName>
        <shortName>FPGS</shortName>
    </alternativeName>
    <alternativeName>
        <fullName>Tetrahydrofolylpolyglutamate synthase</fullName>
        <shortName>Tetrahydrofolate synthase</shortName>
    </alternativeName>
</protein>
<name>FOLE_NEUCR</name>